<organism>
    <name type="scientific">Danio rerio</name>
    <name type="common">Zebrafish</name>
    <name type="synonym">Brachydanio rerio</name>
    <dbReference type="NCBI Taxonomy" id="7955"/>
    <lineage>
        <taxon>Eukaryota</taxon>
        <taxon>Metazoa</taxon>
        <taxon>Chordata</taxon>
        <taxon>Craniata</taxon>
        <taxon>Vertebrata</taxon>
        <taxon>Euteleostomi</taxon>
        <taxon>Actinopterygii</taxon>
        <taxon>Neopterygii</taxon>
        <taxon>Teleostei</taxon>
        <taxon>Ostariophysi</taxon>
        <taxon>Cypriniformes</taxon>
        <taxon>Danionidae</taxon>
        <taxon>Danioninae</taxon>
        <taxon>Danio</taxon>
    </lineage>
</organism>
<sequence length="761" mass="86356">MDQGGGILELHKDLKMPHTMIMPDFGMSGIAHLDGEHIVVSVPEAVMVSDVVTDEEGIMLETALEAEVVEEPDICQEDVITTEGVIMSESILGAEVAIQEALSGTADLIEETVPDQVFVAELMSPHIQSPLDHNLVSAEVMVTDADTVIDSHDTLQSDVTIKADDDVEDVKSTSEDYLMISLDEVGGKLDIEDTSLKISADVGQDDDGSKEDEFSSEVIKVYIFKADGDEDVEIGSTEVVEESDFPGRHTVMESVGSGRLPREKMVYMAVKDANQEDDLNCSEMTDQVYMEVIVGEEEAPAITEAQMEDSPVNKTIVPAAWATAYGSSLESKNGAATPYLQITDSISTSRALKQKIKKRRRGETRQCQTAVIIGPDGQPLTVYPCHICGKKFKSRGFLKRHMKNHPDHMFKKKYQCTDCEFTTNKKVSFHNHLESHKLIIKNEKIPEYTEYTRRYHEASPLSSNKLILRDKEPKLHKCKYCEYETAEQGLLNRHLLAVHSKNFAHVCVECAKGFRHPSELKKHMRTHTGEKPFHCQHCEFSCADQSNLKTHIKSKHGTDLPFKCGHCPQAFADDKELQRHAEIFQGHKTHQCPHCEHKSTNSSDLKRHIISVHTKDFPHKCDVCEKGFHRPSELKKHSETHKGNKVHQCRHCDFKTLDPFTLSRHILSVHTKDLPFKCKRCKRGFRHQNELKKHMKTHSGRKVYQCQYCEYNTTDASGFKRHVISIHTKDYPHRCDYCKKGFRRPSEKNQHIMRHHKETLL</sequence>
<proteinExistence type="evidence at protein level"/>
<comment type="function">
    <text evidence="1">Transcription regulator required for brain development. Probably acts as a transcription factor that binds to the promoter of target genes, leading to activate their expression (By similarity).</text>
</comment>
<comment type="subcellular location">
    <subcellularLocation>
        <location evidence="1">Nucleus</location>
    </subcellularLocation>
    <subcellularLocation>
        <location evidence="4">Cytoplasm</location>
    </subcellularLocation>
</comment>
<comment type="tissue specificity">
    <text evidence="4">Present in ovary and brain but not in other tissues (at protein level).</text>
</comment>
<comment type="developmental stage">
    <text evidence="4">Present in ooplasm of stage I, II, and III oocytes. Present in the vitelline envelope.</text>
</comment>
<comment type="domain">
    <text evidence="2">The sixth zinc finger contains a Phe residue, Phe-584, instead of the final His residue normally found in C2H2-type zinc fingers. There is another His residue a few residues downstream, His-587, but this is not involved in coordinating zinc. Despite the His to Phe substitution, the zinc finger retains the ability to bind zinc using a tridentate metal-binding site of Cys-564, Cys-567 and His-580. The zinc finger also has hydrolytic activity against 4-nitrophenyl acetate.</text>
</comment>
<comment type="similarity">
    <text evidence="5">Belongs to the krueppel C2H2-type zinc-finger protein family.</text>
</comment>
<gene>
    <name type="primary">znf711</name>
    <name type="synonym">zvep</name>
</gene>
<keyword id="KW-0963">Cytoplasm</keyword>
<keyword id="KW-0238">DNA-binding</keyword>
<keyword id="KW-0479">Metal-binding</keyword>
<keyword id="KW-0539">Nucleus</keyword>
<keyword id="KW-1185">Reference proteome</keyword>
<keyword id="KW-0677">Repeat</keyword>
<keyword id="KW-0804">Transcription</keyword>
<keyword id="KW-0805">Transcription regulation</keyword>
<keyword id="KW-0862">Zinc</keyword>
<keyword id="KW-0863">Zinc-finger</keyword>
<protein>
    <recommendedName>
        <fullName>Zinc finger protein 711</fullName>
    </recommendedName>
    <alternativeName>
        <fullName>Vitelline envelope protein</fullName>
    </alternativeName>
</protein>
<evidence type="ECO:0000250" key="1"/>
<evidence type="ECO:0000250" key="2">
    <source>
        <dbReference type="UniProtKB" id="Q9Y462"/>
    </source>
</evidence>
<evidence type="ECO:0000255" key="3">
    <source>
        <dbReference type="PROSITE-ProRule" id="PRU00042"/>
    </source>
</evidence>
<evidence type="ECO:0000269" key="4">
    <source>
    </source>
</evidence>
<evidence type="ECO:0000305" key="5"/>
<name>ZN711_DANRE</name>
<reference key="1">
    <citation type="journal article" date="2009" name="Mol. Reprod. Dev.">
        <title>Cloning, characterization and expression of zvep, a novel vitelline envelope-specific gene in the zebrafish ovary.</title>
        <authorList>
            <person name="Xu Y."/>
            <person name="Lei Y."/>
            <person name="Liu Q."/>
            <person name="Liu Y."/>
            <person name="Liu S."/>
            <person name="Cheng H."/>
            <person name="Deng F."/>
        </authorList>
    </citation>
    <scope>NUCLEOTIDE SEQUENCE [MRNA]</scope>
    <scope>TISSUE SPECIFICITY</scope>
    <scope>DEVELOPMENTAL STAGE</scope>
    <scope>SUBCELLULAR LOCATION</scope>
    <source>
        <tissue>Ovary</tissue>
    </source>
</reference>
<feature type="chain" id="PRO_0000399820" description="Zinc finger protein 711">
    <location>
        <begin position="1"/>
        <end position="761"/>
    </location>
</feature>
<feature type="zinc finger region" description="C2H2-type 1" evidence="3">
    <location>
        <begin position="383"/>
        <end position="408"/>
    </location>
</feature>
<feature type="zinc finger region" description="C2H2-type 2" evidence="3">
    <location>
        <begin position="414"/>
        <end position="436"/>
    </location>
</feature>
<feature type="zinc finger region" description="C2H2-type 3" evidence="3">
    <location>
        <begin position="476"/>
        <end position="499"/>
    </location>
</feature>
<feature type="zinc finger region" description="C2H2-type 4" evidence="3">
    <location>
        <begin position="505"/>
        <end position="527"/>
    </location>
</feature>
<feature type="zinc finger region" description="C2H2-type 5" evidence="3">
    <location>
        <begin position="533"/>
        <end position="556"/>
    </location>
</feature>
<feature type="zinc finger region" description="C2H2-type 6; atypical" evidence="2">
    <location>
        <begin position="562"/>
        <end position="584"/>
    </location>
</feature>
<feature type="zinc finger region" description="C2H2-type 7" evidence="3">
    <location>
        <begin position="590"/>
        <end position="613"/>
    </location>
</feature>
<feature type="zinc finger region" description="C2H2-type 8" evidence="3">
    <location>
        <begin position="619"/>
        <end position="641"/>
    </location>
</feature>
<feature type="zinc finger region" description="C2H2-type 9" evidence="3">
    <location>
        <begin position="647"/>
        <end position="670"/>
    </location>
</feature>
<feature type="zinc finger region" description="C2H2-type 10" evidence="3">
    <location>
        <begin position="676"/>
        <end position="698"/>
    </location>
</feature>
<feature type="zinc finger region" description="C2H2-type 11" evidence="3">
    <location>
        <begin position="704"/>
        <end position="727"/>
    </location>
</feature>
<feature type="zinc finger region" description="C2H2-type 12" evidence="3">
    <location>
        <begin position="733"/>
        <end position="755"/>
    </location>
</feature>
<feature type="binding site" evidence="2">
    <location>
        <position position="564"/>
    </location>
    <ligand>
        <name>Zn(2+)</name>
        <dbReference type="ChEBI" id="CHEBI:29105"/>
    </ligand>
</feature>
<feature type="binding site" evidence="2">
    <location>
        <position position="567"/>
    </location>
    <ligand>
        <name>Zn(2+)</name>
        <dbReference type="ChEBI" id="CHEBI:29105"/>
    </ligand>
</feature>
<feature type="binding site" evidence="2">
    <location>
        <position position="580"/>
    </location>
    <ligand>
        <name>Zn(2+)</name>
        <dbReference type="ChEBI" id="CHEBI:29105"/>
    </ligand>
</feature>
<dbReference type="EMBL" id="EU122381">
    <property type="protein sequence ID" value="ABV24353.1"/>
    <property type="molecule type" value="mRNA"/>
</dbReference>
<dbReference type="RefSeq" id="NP_001098993.1">
    <property type="nucleotide sequence ID" value="NM_001105523.1"/>
</dbReference>
<dbReference type="SMR" id="A7Y7X5"/>
<dbReference type="FunCoup" id="A7Y7X5">
    <property type="interactions" value="564"/>
</dbReference>
<dbReference type="STRING" id="7955.ENSDARP00000097432"/>
<dbReference type="PaxDb" id="7955-ENSDARP00000097432"/>
<dbReference type="GeneID" id="562505"/>
<dbReference type="KEGG" id="dre:562505"/>
<dbReference type="AGR" id="ZFIN:ZDB-GENE-081107-49"/>
<dbReference type="CTD" id="7552"/>
<dbReference type="ZFIN" id="ZDB-GENE-081107-49">
    <property type="gene designation" value="znf711"/>
</dbReference>
<dbReference type="eggNOG" id="KOG1721">
    <property type="taxonomic scope" value="Eukaryota"/>
</dbReference>
<dbReference type="InParanoid" id="A7Y7X5"/>
<dbReference type="OrthoDB" id="3561125at2759"/>
<dbReference type="PhylomeDB" id="A7Y7X5"/>
<dbReference type="PRO" id="PR:A7Y7X5"/>
<dbReference type="Proteomes" id="UP000000437">
    <property type="component" value="Alternate scaffold 14"/>
</dbReference>
<dbReference type="Proteomes" id="UP000000437">
    <property type="component" value="Chromosome 14"/>
</dbReference>
<dbReference type="GO" id="GO:0005737">
    <property type="term" value="C:cytoplasm"/>
    <property type="evidence" value="ECO:0000314"/>
    <property type="project" value="ZFIN"/>
</dbReference>
<dbReference type="GO" id="GO:0005634">
    <property type="term" value="C:nucleus"/>
    <property type="evidence" value="ECO:0000250"/>
    <property type="project" value="UniProtKB"/>
</dbReference>
<dbReference type="GO" id="GO:0060388">
    <property type="term" value="C:vitelline envelope"/>
    <property type="evidence" value="ECO:0000314"/>
    <property type="project" value="ZFIN"/>
</dbReference>
<dbReference type="GO" id="GO:0000981">
    <property type="term" value="F:DNA-binding transcription factor activity, RNA polymerase II-specific"/>
    <property type="evidence" value="ECO:0000318"/>
    <property type="project" value="GO_Central"/>
</dbReference>
<dbReference type="GO" id="GO:0000977">
    <property type="term" value="F:RNA polymerase II transcription regulatory region sequence-specific DNA binding"/>
    <property type="evidence" value="ECO:0000318"/>
    <property type="project" value="GO_Central"/>
</dbReference>
<dbReference type="GO" id="GO:0043565">
    <property type="term" value="F:sequence-specific DNA binding"/>
    <property type="evidence" value="ECO:0000250"/>
    <property type="project" value="UniProtKB"/>
</dbReference>
<dbReference type="GO" id="GO:0008270">
    <property type="term" value="F:zinc ion binding"/>
    <property type="evidence" value="ECO:0000250"/>
    <property type="project" value="UniProtKB"/>
</dbReference>
<dbReference type="GO" id="GO:0045893">
    <property type="term" value="P:positive regulation of DNA-templated transcription"/>
    <property type="evidence" value="ECO:0000250"/>
    <property type="project" value="UniProtKB"/>
</dbReference>
<dbReference type="GO" id="GO:0006357">
    <property type="term" value="P:regulation of transcription by RNA polymerase II"/>
    <property type="evidence" value="ECO:0000318"/>
    <property type="project" value="GO_Central"/>
</dbReference>
<dbReference type="FunFam" id="3.30.160.60:FF:000100">
    <property type="entry name" value="Zinc finger 45-like"/>
    <property type="match status" value="1"/>
</dbReference>
<dbReference type="FunFam" id="3.30.160.60:FF:000054">
    <property type="entry name" value="Zinc finger protein 711"/>
    <property type="match status" value="1"/>
</dbReference>
<dbReference type="FunFam" id="3.30.160.60:FF:000179">
    <property type="entry name" value="Zinc finger protein 711"/>
    <property type="match status" value="1"/>
</dbReference>
<dbReference type="FunFam" id="3.30.160.60:FF:000209">
    <property type="entry name" value="Zinc finger protein 711"/>
    <property type="match status" value="3"/>
</dbReference>
<dbReference type="Gene3D" id="3.30.160.60">
    <property type="entry name" value="Classic Zinc Finger"/>
    <property type="match status" value="7"/>
</dbReference>
<dbReference type="InterPro" id="IPR006794">
    <property type="entry name" value="Transcrp_activ_Zfx/Zfy-dom"/>
</dbReference>
<dbReference type="InterPro" id="IPR036236">
    <property type="entry name" value="Znf_C2H2_sf"/>
</dbReference>
<dbReference type="InterPro" id="IPR013087">
    <property type="entry name" value="Znf_C2H2_type"/>
</dbReference>
<dbReference type="PANTHER" id="PTHR24376:SF243">
    <property type="entry name" value="C2H2-TYPE DOMAIN-CONTAINING PROTEIN"/>
    <property type="match status" value="1"/>
</dbReference>
<dbReference type="PANTHER" id="PTHR24376">
    <property type="entry name" value="ZINC FINGER PROTEIN"/>
    <property type="match status" value="1"/>
</dbReference>
<dbReference type="Pfam" id="PF00096">
    <property type="entry name" value="zf-C2H2"/>
    <property type="match status" value="6"/>
</dbReference>
<dbReference type="Pfam" id="PF04704">
    <property type="entry name" value="Zfx_Zfy_act"/>
    <property type="match status" value="1"/>
</dbReference>
<dbReference type="SMART" id="SM00355">
    <property type="entry name" value="ZnF_C2H2"/>
    <property type="match status" value="12"/>
</dbReference>
<dbReference type="SUPFAM" id="SSF57667">
    <property type="entry name" value="beta-beta-alpha zinc fingers"/>
    <property type="match status" value="6"/>
</dbReference>
<dbReference type="PROSITE" id="PS00028">
    <property type="entry name" value="ZINC_FINGER_C2H2_1"/>
    <property type="match status" value="6"/>
</dbReference>
<dbReference type="PROSITE" id="PS50157">
    <property type="entry name" value="ZINC_FINGER_C2H2_2"/>
    <property type="match status" value="9"/>
</dbReference>
<accession>A7Y7X5</accession>